<dbReference type="EMBL" id="CP001164">
    <property type="protein sequence ID" value="ACI37907.1"/>
    <property type="molecule type" value="Genomic_DNA"/>
</dbReference>
<dbReference type="RefSeq" id="WP_000202900.1">
    <property type="nucleotide sequence ID" value="NC_011353.1"/>
</dbReference>
<dbReference type="SMR" id="B5Z171"/>
<dbReference type="KEGG" id="ecf:ECH74115_5511"/>
<dbReference type="HOGENOM" id="CLU_127561_0_1_6"/>
<dbReference type="GO" id="GO:0005886">
    <property type="term" value="C:plasma membrane"/>
    <property type="evidence" value="ECO:0007669"/>
    <property type="project" value="UniProtKB-SubCell"/>
</dbReference>
<dbReference type="GO" id="GO:0016036">
    <property type="term" value="P:cellular response to phosphate starvation"/>
    <property type="evidence" value="ECO:0007669"/>
    <property type="project" value="InterPro"/>
</dbReference>
<dbReference type="HAMAP" id="MF_01048">
    <property type="entry name" value="PsiE"/>
    <property type="match status" value="1"/>
</dbReference>
<dbReference type="InterPro" id="IPR009315">
    <property type="entry name" value="P_starv_induced_PsiE"/>
</dbReference>
<dbReference type="InterPro" id="IPR020948">
    <property type="entry name" value="P_starv_induced_PsiE-like"/>
</dbReference>
<dbReference type="NCBIfam" id="NF002764">
    <property type="entry name" value="PRK02833.1-2"/>
    <property type="match status" value="1"/>
</dbReference>
<dbReference type="NCBIfam" id="NF002765">
    <property type="entry name" value="PRK02833.1-3"/>
    <property type="match status" value="1"/>
</dbReference>
<dbReference type="NCBIfam" id="NF002767">
    <property type="entry name" value="PRK02833.1-5"/>
    <property type="match status" value="1"/>
</dbReference>
<dbReference type="PANTHER" id="PTHR37819">
    <property type="entry name" value="PROTEIN PSIE"/>
    <property type="match status" value="1"/>
</dbReference>
<dbReference type="PANTHER" id="PTHR37819:SF1">
    <property type="entry name" value="PROTEIN PSIE"/>
    <property type="match status" value="1"/>
</dbReference>
<dbReference type="Pfam" id="PF06146">
    <property type="entry name" value="PsiE"/>
    <property type="match status" value="1"/>
</dbReference>
<dbReference type="PIRSF" id="PIRSF029598">
    <property type="entry name" value="PsiE"/>
    <property type="match status" value="1"/>
</dbReference>
<accession>B5Z171</accession>
<proteinExistence type="inferred from homology"/>
<protein>
    <recommendedName>
        <fullName evidence="1">Protein PsiE</fullName>
    </recommendedName>
</protein>
<sequence>MTSLSRPRVEFISTILQTVLNLGLLCLGLILVVFLGKETVHLADVLFAPEQASKYELVEGLVVYFLYFEFIALIVKYFQSGFHFPLRYFVYIGITAIVRLIIVDHKSPLDVLIYSAAILLLVVTLWLCNSKRLKRE</sequence>
<comment type="subcellular location">
    <subcellularLocation>
        <location evidence="1">Cell inner membrane</location>
        <topology evidence="1">Multi-pass membrane protein</topology>
    </subcellularLocation>
</comment>
<comment type="similarity">
    <text evidence="1">Belongs to the PsiE family.</text>
</comment>
<keyword id="KW-0997">Cell inner membrane</keyword>
<keyword id="KW-1003">Cell membrane</keyword>
<keyword id="KW-0472">Membrane</keyword>
<keyword id="KW-0812">Transmembrane</keyword>
<keyword id="KW-1133">Transmembrane helix</keyword>
<evidence type="ECO:0000255" key="1">
    <source>
        <dbReference type="HAMAP-Rule" id="MF_01048"/>
    </source>
</evidence>
<feature type="chain" id="PRO_1000136208" description="Protein PsiE">
    <location>
        <begin position="1"/>
        <end position="136"/>
    </location>
</feature>
<feature type="transmembrane region" description="Helical" evidence="1">
    <location>
        <begin position="15"/>
        <end position="35"/>
    </location>
</feature>
<feature type="transmembrane region" description="Helical" evidence="1">
    <location>
        <begin position="55"/>
        <end position="75"/>
    </location>
</feature>
<feature type="transmembrane region" description="Helical" evidence="1">
    <location>
        <begin position="82"/>
        <end position="102"/>
    </location>
</feature>
<feature type="transmembrane region" description="Helical" evidence="1">
    <location>
        <begin position="108"/>
        <end position="128"/>
    </location>
</feature>
<reference key="1">
    <citation type="journal article" date="2011" name="Proc. Natl. Acad. Sci. U.S.A.">
        <title>Genomic anatomy of Escherichia coli O157:H7 outbreaks.</title>
        <authorList>
            <person name="Eppinger M."/>
            <person name="Mammel M.K."/>
            <person name="Leclerc J.E."/>
            <person name="Ravel J."/>
            <person name="Cebula T.A."/>
        </authorList>
    </citation>
    <scope>NUCLEOTIDE SEQUENCE [LARGE SCALE GENOMIC DNA]</scope>
    <source>
        <strain>EC4115 / EHEC</strain>
    </source>
</reference>
<name>PSIE_ECO5E</name>
<organism>
    <name type="scientific">Escherichia coli O157:H7 (strain EC4115 / EHEC)</name>
    <dbReference type="NCBI Taxonomy" id="444450"/>
    <lineage>
        <taxon>Bacteria</taxon>
        <taxon>Pseudomonadati</taxon>
        <taxon>Pseudomonadota</taxon>
        <taxon>Gammaproteobacteria</taxon>
        <taxon>Enterobacterales</taxon>
        <taxon>Enterobacteriaceae</taxon>
        <taxon>Escherichia</taxon>
    </lineage>
</organism>
<gene>
    <name evidence="1" type="primary">psiE</name>
    <name type="ordered locus">ECH74115_5511</name>
</gene>